<reference key="1">
    <citation type="journal article" date="2010" name="PLoS ONE">
        <title>The complete genome sequence of Cupriavidus metallidurans strain CH34, a master survivalist in harsh and anthropogenic environments.</title>
        <authorList>
            <person name="Janssen P.J."/>
            <person name="Van Houdt R."/>
            <person name="Moors H."/>
            <person name="Monsieurs P."/>
            <person name="Morin N."/>
            <person name="Michaux A."/>
            <person name="Benotmane M.A."/>
            <person name="Leys N."/>
            <person name="Vallaeys T."/>
            <person name="Lapidus A."/>
            <person name="Monchy S."/>
            <person name="Medigue C."/>
            <person name="Taghavi S."/>
            <person name="McCorkle S."/>
            <person name="Dunn J."/>
            <person name="van der Lelie D."/>
            <person name="Mergeay M."/>
        </authorList>
    </citation>
    <scope>NUCLEOTIDE SEQUENCE [LARGE SCALE GENOMIC DNA]</scope>
    <source>
        <strain>ATCC 43123 / DSM 2839 / NBRC 102507 / CH34</strain>
    </source>
</reference>
<proteinExistence type="inferred from homology"/>
<dbReference type="EMBL" id="CP000352">
    <property type="protein sequence ID" value="ABF08321.1"/>
    <property type="molecule type" value="Genomic_DNA"/>
</dbReference>
<dbReference type="RefSeq" id="WP_011516188.1">
    <property type="nucleotide sequence ID" value="NC_007973.1"/>
</dbReference>
<dbReference type="SMR" id="Q1LNF5"/>
<dbReference type="STRING" id="266264.Rmet_1438"/>
<dbReference type="KEGG" id="rme:Rmet_1438"/>
<dbReference type="eggNOG" id="COG0233">
    <property type="taxonomic scope" value="Bacteria"/>
</dbReference>
<dbReference type="HOGENOM" id="CLU_073981_2_0_4"/>
<dbReference type="Proteomes" id="UP000002429">
    <property type="component" value="Chromosome"/>
</dbReference>
<dbReference type="GO" id="GO:0005829">
    <property type="term" value="C:cytosol"/>
    <property type="evidence" value="ECO:0007669"/>
    <property type="project" value="GOC"/>
</dbReference>
<dbReference type="GO" id="GO:0043023">
    <property type="term" value="F:ribosomal large subunit binding"/>
    <property type="evidence" value="ECO:0007669"/>
    <property type="project" value="TreeGrafter"/>
</dbReference>
<dbReference type="GO" id="GO:0002184">
    <property type="term" value="P:cytoplasmic translational termination"/>
    <property type="evidence" value="ECO:0007669"/>
    <property type="project" value="TreeGrafter"/>
</dbReference>
<dbReference type="CDD" id="cd00520">
    <property type="entry name" value="RRF"/>
    <property type="match status" value="1"/>
</dbReference>
<dbReference type="FunFam" id="1.10.132.20:FF:000001">
    <property type="entry name" value="Ribosome-recycling factor"/>
    <property type="match status" value="1"/>
</dbReference>
<dbReference type="FunFam" id="3.30.1360.40:FF:000001">
    <property type="entry name" value="Ribosome-recycling factor"/>
    <property type="match status" value="1"/>
</dbReference>
<dbReference type="Gene3D" id="3.30.1360.40">
    <property type="match status" value="1"/>
</dbReference>
<dbReference type="Gene3D" id="1.10.132.20">
    <property type="entry name" value="Ribosome-recycling factor"/>
    <property type="match status" value="1"/>
</dbReference>
<dbReference type="HAMAP" id="MF_00040">
    <property type="entry name" value="RRF"/>
    <property type="match status" value="1"/>
</dbReference>
<dbReference type="InterPro" id="IPR002661">
    <property type="entry name" value="Ribosome_recyc_fac"/>
</dbReference>
<dbReference type="InterPro" id="IPR023584">
    <property type="entry name" value="Ribosome_recyc_fac_dom"/>
</dbReference>
<dbReference type="InterPro" id="IPR036191">
    <property type="entry name" value="RRF_sf"/>
</dbReference>
<dbReference type="NCBIfam" id="TIGR00496">
    <property type="entry name" value="frr"/>
    <property type="match status" value="1"/>
</dbReference>
<dbReference type="PANTHER" id="PTHR20982:SF3">
    <property type="entry name" value="MITOCHONDRIAL RIBOSOME RECYCLING FACTOR PSEUDO 1"/>
    <property type="match status" value="1"/>
</dbReference>
<dbReference type="PANTHER" id="PTHR20982">
    <property type="entry name" value="RIBOSOME RECYCLING FACTOR"/>
    <property type="match status" value="1"/>
</dbReference>
<dbReference type="Pfam" id="PF01765">
    <property type="entry name" value="RRF"/>
    <property type="match status" value="1"/>
</dbReference>
<dbReference type="SUPFAM" id="SSF55194">
    <property type="entry name" value="Ribosome recycling factor, RRF"/>
    <property type="match status" value="1"/>
</dbReference>
<comment type="function">
    <text evidence="1">Responsible for the release of ribosomes from messenger RNA at the termination of protein biosynthesis. May increase the efficiency of translation by recycling ribosomes from one round of translation to another.</text>
</comment>
<comment type="subcellular location">
    <subcellularLocation>
        <location evidence="1">Cytoplasm</location>
    </subcellularLocation>
</comment>
<comment type="similarity">
    <text evidence="1">Belongs to the RRF family.</text>
</comment>
<protein>
    <recommendedName>
        <fullName evidence="1">Ribosome-recycling factor</fullName>
        <shortName evidence="1">RRF</shortName>
    </recommendedName>
    <alternativeName>
        <fullName evidence="1">Ribosome-releasing factor</fullName>
    </alternativeName>
</protein>
<feature type="chain" id="PRO_1000003242" description="Ribosome-recycling factor">
    <location>
        <begin position="1"/>
        <end position="186"/>
    </location>
</feature>
<name>RRF_CUPMC</name>
<evidence type="ECO:0000255" key="1">
    <source>
        <dbReference type="HAMAP-Rule" id="MF_00040"/>
    </source>
</evidence>
<organism>
    <name type="scientific">Cupriavidus metallidurans (strain ATCC 43123 / DSM 2839 / NBRC 102507 / CH34)</name>
    <name type="common">Ralstonia metallidurans</name>
    <dbReference type="NCBI Taxonomy" id="266264"/>
    <lineage>
        <taxon>Bacteria</taxon>
        <taxon>Pseudomonadati</taxon>
        <taxon>Pseudomonadota</taxon>
        <taxon>Betaproteobacteria</taxon>
        <taxon>Burkholderiales</taxon>
        <taxon>Burkholderiaceae</taxon>
        <taxon>Cupriavidus</taxon>
    </lineage>
</organism>
<accession>Q1LNF5</accession>
<sequence>MTVADTKKSVEQKMQKSIEAFKADLAKVRTGRAHTGLLDHVQVDYYGSMVPISQVAAVSLADARTISVQPWEKKMVQAVEKAIRDGDLGLNPATMGDVIRVPMPPLTEERRRELTKVVKGEAEGAKVAVRNLRRDANEQFKKLVKDKAISEDDERRGQDEVQKLTDKFVAEIDKLVAEKEKEIMTV</sequence>
<gene>
    <name evidence="1" type="primary">frr</name>
    <name type="ordered locus">Rmet_1438</name>
</gene>
<keyword id="KW-0963">Cytoplasm</keyword>
<keyword id="KW-0648">Protein biosynthesis</keyword>
<keyword id="KW-1185">Reference proteome</keyword>